<dbReference type="EMBL" id="CU329670">
    <property type="protein sequence ID" value="CAA93620.1"/>
    <property type="molecule type" value="Genomic_DNA"/>
</dbReference>
<dbReference type="PIR" id="T39032">
    <property type="entry name" value="T39032"/>
</dbReference>
<dbReference type="SMR" id="Q10311"/>
<dbReference type="BioGRID" id="279360">
    <property type="interactions" value="30"/>
</dbReference>
<dbReference type="FunCoup" id="Q10311">
    <property type="interactions" value="28"/>
</dbReference>
<dbReference type="STRING" id="284812.Q10311"/>
<dbReference type="PaxDb" id="4896-SPAC6C3.08.1"/>
<dbReference type="EnsemblFungi" id="SPAC6C3.08.1">
    <property type="protein sequence ID" value="SPAC6C3.08.1:pep"/>
    <property type="gene ID" value="SPAC6C3.08"/>
</dbReference>
<dbReference type="KEGG" id="spo:2542919"/>
<dbReference type="PomBase" id="SPAC6C3.08"/>
<dbReference type="VEuPathDB" id="FungiDB:SPAC6C3.08"/>
<dbReference type="eggNOG" id="KOG4412">
    <property type="taxonomic scope" value="Eukaryota"/>
</dbReference>
<dbReference type="HOGENOM" id="CLU_000134_18_2_1"/>
<dbReference type="InParanoid" id="Q10311"/>
<dbReference type="OMA" id="WAVAYNR"/>
<dbReference type="PhylomeDB" id="Q10311"/>
<dbReference type="Reactome" id="R-SPO-8951664">
    <property type="pathway name" value="Neddylation"/>
</dbReference>
<dbReference type="Reactome" id="R-SPO-9013405">
    <property type="pathway name" value="RHOD GTPase cycle"/>
</dbReference>
<dbReference type="Reactome" id="R-SPO-983168">
    <property type="pathway name" value="Antigen processing: Ubiquitination &amp; Proteasome degradation"/>
</dbReference>
<dbReference type="PRO" id="PR:Q10311"/>
<dbReference type="Proteomes" id="UP000002485">
    <property type="component" value="Chromosome I"/>
</dbReference>
<dbReference type="GO" id="GO:0005829">
    <property type="term" value="C:cytosol"/>
    <property type="evidence" value="ECO:0007005"/>
    <property type="project" value="PomBase"/>
</dbReference>
<dbReference type="GO" id="GO:0005634">
    <property type="term" value="C:nucleus"/>
    <property type="evidence" value="ECO:0007005"/>
    <property type="project" value="PomBase"/>
</dbReference>
<dbReference type="GO" id="GO:0044183">
    <property type="term" value="F:protein folding chaperone"/>
    <property type="evidence" value="ECO:0000303"/>
    <property type="project" value="PomBase"/>
</dbReference>
<dbReference type="GO" id="GO:0070682">
    <property type="term" value="P:proteasome regulatory particle assembly"/>
    <property type="evidence" value="ECO:0000304"/>
    <property type="project" value="PomBase"/>
</dbReference>
<dbReference type="Gene3D" id="1.25.40.20">
    <property type="entry name" value="Ankyrin repeat-containing domain"/>
    <property type="match status" value="2"/>
</dbReference>
<dbReference type="InterPro" id="IPR002110">
    <property type="entry name" value="Ankyrin_rpt"/>
</dbReference>
<dbReference type="InterPro" id="IPR036770">
    <property type="entry name" value="Ankyrin_rpt-contain_sf"/>
</dbReference>
<dbReference type="PANTHER" id="PTHR24171:SF10">
    <property type="entry name" value="ANKYRIN REPEAT DOMAIN-CONTAINING PROTEIN 29-LIKE"/>
    <property type="match status" value="1"/>
</dbReference>
<dbReference type="PANTHER" id="PTHR24171">
    <property type="entry name" value="ANKYRIN REPEAT DOMAIN-CONTAINING PROTEIN 39-RELATED"/>
    <property type="match status" value="1"/>
</dbReference>
<dbReference type="Pfam" id="PF00023">
    <property type="entry name" value="Ank"/>
    <property type="match status" value="2"/>
</dbReference>
<dbReference type="Pfam" id="PF12796">
    <property type="entry name" value="Ank_2"/>
    <property type="match status" value="1"/>
</dbReference>
<dbReference type="SMART" id="SM00248">
    <property type="entry name" value="ANK"/>
    <property type="match status" value="5"/>
</dbReference>
<dbReference type="SUPFAM" id="SSF48403">
    <property type="entry name" value="Ankyrin repeat"/>
    <property type="match status" value="1"/>
</dbReference>
<dbReference type="PROSITE" id="PS50297">
    <property type="entry name" value="ANK_REP_REGION"/>
    <property type="match status" value="1"/>
</dbReference>
<dbReference type="PROSITE" id="PS50088">
    <property type="entry name" value="ANK_REPEAT"/>
    <property type="match status" value="3"/>
</dbReference>
<protein>
    <recommendedName>
        <fullName>Ankyrin repeat-containing protein C6C3.08</fullName>
    </recommendedName>
</protein>
<sequence>MVYASLGKAIEENCPEEYVEQAIQNDPNSLNAVDDDKRTPLHWACSVGKVNTIYFLLKQPNIKPDEKDEAGWTPLMISINNRSVPDNVIEELINRSDVDPTITTRGGQTCLHYAAGKGRLSIVQLLCDKAPELIRKKDLQGQTPLHRAAAVGKIQVVKYLISQRAPLNTSDSYGFTPLHFALAEGHPDVGVELVRAGADTLRKDSENHTALEVCPDRIVCNEFLEACKEQNLEI</sequence>
<proteinExistence type="predicted"/>
<keyword id="KW-0040">ANK repeat</keyword>
<keyword id="KW-1185">Reference proteome</keyword>
<keyword id="KW-0677">Repeat</keyword>
<accession>Q10311</accession>
<name>YD58_SCHPO</name>
<gene>
    <name type="ORF">SPAC6C3.08</name>
</gene>
<feature type="chain" id="PRO_0000067249" description="Ankyrin repeat-containing protein C6C3.08">
    <location>
        <begin position="1"/>
        <end position="234"/>
    </location>
</feature>
<feature type="repeat" description="ANK 1">
    <location>
        <begin position="36"/>
        <end position="66"/>
    </location>
</feature>
<feature type="repeat" description="ANK 2">
    <location>
        <begin position="70"/>
        <end position="100"/>
    </location>
</feature>
<feature type="repeat" description="ANK 3">
    <location>
        <begin position="106"/>
        <end position="135"/>
    </location>
</feature>
<feature type="repeat" description="ANK 4">
    <location>
        <begin position="140"/>
        <end position="169"/>
    </location>
</feature>
<feature type="repeat" description="ANK 5">
    <location>
        <begin position="173"/>
        <end position="203"/>
    </location>
</feature>
<reference key="1">
    <citation type="journal article" date="2002" name="Nature">
        <title>The genome sequence of Schizosaccharomyces pombe.</title>
        <authorList>
            <person name="Wood V."/>
            <person name="Gwilliam R."/>
            <person name="Rajandream M.A."/>
            <person name="Lyne M.H."/>
            <person name="Lyne R."/>
            <person name="Stewart A."/>
            <person name="Sgouros J.G."/>
            <person name="Peat N."/>
            <person name="Hayles J."/>
            <person name="Baker S.G."/>
            <person name="Basham D."/>
            <person name="Bowman S."/>
            <person name="Brooks K."/>
            <person name="Brown D."/>
            <person name="Brown S."/>
            <person name="Chillingworth T."/>
            <person name="Churcher C.M."/>
            <person name="Collins M."/>
            <person name="Connor R."/>
            <person name="Cronin A."/>
            <person name="Davis P."/>
            <person name="Feltwell T."/>
            <person name="Fraser A."/>
            <person name="Gentles S."/>
            <person name="Goble A."/>
            <person name="Hamlin N."/>
            <person name="Harris D.E."/>
            <person name="Hidalgo J."/>
            <person name="Hodgson G."/>
            <person name="Holroyd S."/>
            <person name="Hornsby T."/>
            <person name="Howarth S."/>
            <person name="Huckle E.J."/>
            <person name="Hunt S."/>
            <person name="Jagels K."/>
            <person name="James K.D."/>
            <person name="Jones L."/>
            <person name="Jones M."/>
            <person name="Leather S."/>
            <person name="McDonald S."/>
            <person name="McLean J."/>
            <person name="Mooney P."/>
            <person name="Moule S."/>
            <person name="Mungall K.L."/>
            <person name="Murphy L.D."/>
            <person name="Niblett D."/>
            <person name="Odell C."/>
            <person name="Oliver K."/>
            <person name="O'Neil S."/>
            <person name="Pearson D."/>
            <person name="Quail M.A."/>
            <person name="Rabbinowitsch E."/>
            <person name="Rutherford K.M."/>
            <person name="Rutter S."/>
            <person name="Saunders D."/>
            <person name="Seeger K."/>
            <person name="Sharp S."/>
            <person name="Skelton J."/>
            <person name="Simmonds M.N."/>
            <person name="Squares R."/>
            <person name="Squares S."/>
            <person name="Stevens K."/>
            <person name="Taylor K."/>
            <person name="Taylor R.G."/>
            <person name="Tivey A."/>
            <person name="Walsh S.V."/>
            <person name="Warren T."/>
            <person name="Whitehead S."/>
            <person name="Woodward J.R."/>
            <person name="Volckaert G."/>
            <person name="Aert R."/>
            <person name="Robben J."/>
            <person name="Grymonprez B."/>
            <person name="Weltjens I."/>
            <person name="Vanstreels E."/>
            <person name="Rieger M."/>
            <person name="Schaefer M."/>
            <person name="Mueller-Auer S."/>
            <person name="Gabel C."/>
            <person name="Fuchs M."/>
            <person name="Duesterhoeft A."/>
            <person name="Fritzc C."/>
            <person name="Holzer E."/>
            <person name="Moestl D."/>
            <person name="Hilbert H."/>
            <person name="Borzym K."/>
            <person name="Langer I."/>
            <person name="Beck A."/>
            <person name="Lehrach H."/>
            <person name="Reinhardt R."/>
            <person name="Pohl T.M."/>
            <person name="Eger P."/>
            <person name="Zimmermann W."/>
            <person name="Wedler H."/>
            <person name="Wambutt R."/>
            <person name="Purnelle B."/>
            <person name="Goffeau A."/>
            <person name="Cadieu E."/>
            <person name="Dreano S."/>
            <person name="Gloux S."/>
            <person name="Lelaure V."/>
            <person name="Mottier S."/>
            <person name="Galibert F."/>
            <person name="Aves S.J."/>
            <person name="Xiang Z."/>
            <person name="Hunt C."/>
            <person name="Moore K."/>
            <person name="Hurst S.M."/>
            <person name="Lucas M."/>
            <person name="Rochet M."/>
            <person name="Gaillardin C."/>
            <person name="Tallada V.A."/>
            <person name="Garzon A."/>
            <person name="Thode G."/>
            <person name="Daga R.R."/>
            <person name="Cruzado L."/>
            <person name="Jimenez J."/>
            <person name="Sanchez M."/>
            <person name="del Rey F."/>
            <person name="Benito J."/>
            <person name="Dominguez A."/>
            <person name="Revuelta J.L."/>
            <person name="Moreno S."/>
            <person name="Armstrong J."/>
            <person name="Forsburg S.L."/>
            <person name="Cerutti L."/>
            <person name="Lowe T."/>
            <person name="McCombie W.R."/>
            <person name="Paulsen I."/>
            <person name="Potashkin J."/>
            <person name="Shpakovski G.V."/>
            <person name="Ussery D."/>
            <person name="Barrell B.G."/>
            <person name="Nurse P."/>
        </authorList>
    </citation>
    <scope>NUCLEOTIDE SEQUENCE [LARGE SCALE GENOMIC DNA]</scope>
    <source>
        <strain>972 / ATCC 24843</strain>
    </source>
</reference>
<organism>
    <name type="scientific">Schizosaccharomyces pombe (strain 972 / ATCC 24843)</name>
    <name type="common">Fission yeast</name>
    <dbReference type="NCBI Taxonomy" id="284812"/>
    <lineage>
        <taxon>Eukaryota</taxon>
        <taxon>Fungi</taxon>
        <taxon>Dikarya</taxon>
        <taxon>Ascomycota</taxon>
        <taxon>Taphrinomycotina</taxon>
        <taxon>Schizosaccharomycetes</taxon>
        <taxon>Schizosaccharomycetales</taxon>
        <taxon>Schizosaccharomycetaceae</taxon>
        <taxon>Schizosaccharomyces</taxon>
    </lineage>
</organism>